<dbReference type="EC" id="3.5.2.7" evidence="1"/>
<dbReference type="EMBL" id="AE004437">
    <property type="protein sequence ID" value="AAG19579.1"/>
    <property type="molecule type" value="Genomic_DNA"/>
</dbReference>
<dbReference type="PIR" id="G84276">
    <property type="entry name" value="G84276"/>
</dbReference>
<dbReference type="RefSeq" id="WP_010902875.1">
    <property type="nucleotide sequence ID" value="NC_002607.1"/>
</dbReference>
<dbReference type="SMR" id="Q9HQD6"/>
<dbReference type="STRING" id="64091.VNG_1211G"/>
<dbReference type="PaxDb" id="64091-VNG_1211G"/>
<dbReference type="GeneID" id="68693977"/>
<dbReference type="KEGG" id="hal:VNG_1211G"/>
<dbReference type="PATRIC" id="fig|64091.14.peg.928"/>
<dbReference type="HOGENOM" id="CLU_041647_0_1_2"/>
<dbReference type="InParanoid" id="Q9HQD6"/>
<dbReference type="OrthoDB" id="24954at2157"/>
<dbReference type="PhylomeDB" id="Q9HQD6"/>
<dbReference type="UniPathway" id="UPA00379">
    <property type="reaction ID" value="UER00551"/>
</dbReference>
<dbReference type="Proteomes" id="UP000000554">
    <property type="component" value="Chromosome"/>
</dbReference>
<dbReference type="GO" id="GO:0005737">
    <property type="term" value="C:cytoplasm"/>
    <property type="evidence" value="ECO:0007669"/>
    <property type="project" value="UniProtKB-SubCell"/>
</dbReference>
<dbReference type="GO" id="GO:0050480">
    <property type="term" value="F:imidazolonepropionase activity"/>
    <property type="evidence" value="ECO:0000318"/>
    <property type="project" value="GO_Central"/>
</dbReference>
<dbReference type="GO" id="GO:0005506">
    <property type="term" value="F:iron ion binding"/>
    <property type="evidence" value="ECO:0007669"/>
    <property type="project" value="UniProtKB-UniRule"/>
</dbReference>
<dbReference type="GO" id="GO:0008270">
    <property type="term" value="F:zinc ion binding"/>
    <property type="evidence" value="ECO:0007669"/>
    <property type="project" value="UniProtKB-UniRule"/>
</dbReference>
<dbReference type="GO" id="GO:0006548">
    <property type="term" value="P:L-histidine catabolic process"/>
    <property type="evidence" value="ECO:0000318"/>
    <property type="project" value="GO_Central"/>
</dbReference>
<dbReference type="GO" id="GO:0019556">
    <property type="term" value="P:L-histidine catabolic process to glutamate and formamide"/>
    <property type="evidence" value="ECO:0007669"/>
    <property type="project" value="UniProtKB-UniPathway"/>
</dbReference>
<dbReference type="GO" id="GO:0019557">
    <property type="term" value="P:L-histidine catabolic process to glutamate and formate"/>
    <property type="evidence" value="ECO:0007669"/>
    <property type="project" value="UniProtKB-UniPathway"/>
</dbReference>
<dbReference type="FunFam" id="3.20.20.140:FF:000007">
    <property type="entry name" value="Imidazolonepropionase"/>
    <property type="match status" value="1"/>
</dbReference>
<dbReference type="Gene3D" id="3.20.20.140">
    <property type="entry name" value="Metal-dependent hydrolases"/>
    <property type="match status" value="1"/>
</dbReference>
<dbReference type="Gene3D" id="2.30.40.10">
    <property type="entry name" value="Urease, subunit C, domain 1"/>
    <property type="match status" value="1"/>
</dbReference>
<dbReference type="HAMAP" id="MF_00372">
    <property type="entry name" value="HutI"/>
    <property type="match status" value="1"/>
</dbReference>
<dbReference type="InterPro" id="IPR006680">
    <property type="entry name" value="Amidohydro-rel"/>
</dbReference>
<dbReference type="InterPro" id="IPR005920">
    <property type="entry name" value="HutI"/>
</dbReference>
<dbReference type="InterPro" id="IPR011059">
    <property type="entry name" value="Metal-dep_hydrolase_composite"/>
</dbReference>
<dbReference type="InterPro" id="IPR032466">
    <property type="entry name" value="Metal_Hydrolase"/>
</dbReference>
<dbReference type="NCBIfam" id="TIGR01224">
    <property type="entry name" value="hutI"/>
    <property type="match status" value="1"/>
</dbReference>
<dbReference type="PANTHER" id="PTHR42752">
    <property type="entry name" value="IMIDAZOLONEPROPIONASE"/>
    <property type="match status" value="1"/>
</dbReference>
<dbReference type="PANTHER" id="PTHR42752:SF1">
    <property type="entry name" value="IMIDAZOLONEPROPIONASE-RELATED"/>
    <property type="match status" value="1"/>
</dbReference>
<dbReference type="Pfam" id="PF01979">
    <property type="entry name" value="Amidohydro_1"/>
    <property type="match status" value="1"/>
</dbReference>
<dbReference type="SUPFAM" id="SSF51338">
    <property type="entry name" value="Composite domain of metallo-dependent hydrolases"/>
    <property type="match status" value="1"/>
</dbReference>
<dbReference type="SUPFAM" id="SSF51556">
    <property type="entry name" value="Metallo-dependent hydrolases"/>
    <property type="match status" value="1"/>
</dbReference>
<proteinExistence type="inferred from homology"/>
<keyword id="KW-0963">Cytoplasm</keyword>
<keyword id="KW-0369">Histidine metabolism</keyword>
<keyword id="KW-0378">Hydrolase</keyword>
<keyword id="KW-0408">Iron</keyword>
<keyword id="KW-0479">Metal-binding</keyword>
<keyword id="KW-1185">Reference proteome</keyword>
<keyword id="KW-0862">Zinc</keyword>
<feature type="chain" id="PRO_0000160978" description="Imidazolonepropionase">
    <location>
        <begin position="1"/>
        <end position="417"/>
    </location>
</feature>
<feature type="binding site" evidence="1">
    <location>
        <position position="77"/>
    </location>
    <ligand>
        <name>Fe(3+)</name>
        <dbReference type="ChEBI" id="CHEBI:29034"/>
    </ligand>
</feature>
<feature type="binding site" evidence="1">
    <location>
        <position position="77"/>
    </location>
    <ligand>
        <name>Zn(2+)</name>
        <dbReference type="ChEBI" id="CHEBI:29105"/>
    </ligand>
</feature>
<feature type="binding site" evidence="1">
    <location>
        <position position="79"/>
    </location>
    <ligand>
        <name>Fe(3+)</name>
        <dbReference type="ChEBI" id="CHEBI:29034"/>
    </ligand>
</feature>
<feature type="binding site" evidence="1">
    <location>
        <position position="79"/>
    </location>
    <ligand>
        <name>Zn(2+)</name>
        <dbReference type="ChEBI" id="CHEBI:29105"/>
    </ligand>
</feature>
<feature type="binding site" evidence="1">
    <location>
        <position position="86"/>
    </location>
    <ligand>
        <name>4-imidazolone-5-propanoate</name>
        <dbReference type="ChEBI" id="CHEBI:77893"/>
    </ligand>
</feature>
<feature type="binding site" evidence="1">
    <location>
        <position position="149"/>
    </location>
    <ligand>
        <name>4-imidazolone-5-propanoate</name>
        <dbReference type="ChEBI" id="CHEBI:77893"/>
    </ligand>
</feature>
<feature type="binding site" evidence="1">
    <location>
        <position position="149"/>
    </location>
    <ligand>
        <name>N-formimidoyl-L-glutamate</name>
        <dbReference type="ChEBI" id="CHEBI:58928"/>
    </ligand>
</feature>
<feature type="binding site" evidence="1">
    <location>
        <position position="182"/>
    </location>
    <ligand>
        <name>4-imidazolone-5-propanoate</name>
        <dbReference type="ChEBI" id="CHEBI:77893"/>
    </ligand>
</feature>
<feature type="binding site" evidence="1">
    <location>
        <position position="244"/>
    </location>
    <ligand>
        <name>Fe(3+)</name>
        <dbReference type="ChEBI" id="CHEBI:29034"/>
    </ligand>
</feature>
<feature type="binding site" evidence="1">
    <location>
        <position position="244"/>
    </location>
    <ligand>
        <name>Zn(2+)</name>
        <dbReference type="ChEBI" id="CHEBI:29105"/>
    </ligand>
</feature>
<feature type="binding site" evidence="1">
    <location>
        <position position="247"/>
    </location>
    <ligand>
        <name>4-imidazolone-5-propanoate</name>
        <dbReference type="ChEBI" id="CHEBI:77893"/>
    </ligand>
</feature>
<feature type="binding site" evidence="1">
    <location>
        <position position="323"/>
    </location>
    <ligand>
        <name>Fe(3+)</name>
        <dbReference type="ChEBI" id="CHEBI:29034"/>
    </ligand>
</feature>
<feature type="binding site" evidence="1">
    <location>
        <position position="323"/>
    </location>
    <ligand>
        <name>Zn(2+)</name>
        <dbReference type="ChEBI" id="CHEBI:29105"/>
    </ligand>
</feature>
<feature type="binding site" evidence="1">
    <location>
        <position position="325"/>
    </location>
    <ligand>
        <name>N-formimidoyl-L-glutamate</name>
        <dbReference type="ChEBI" id="CHEBI:58928"/>
    </ligand>
</feature>
<sequence>MSSLDAVVHGARELVVGPAAGGDTLETHADGAVAVVDGAVAAVGDTADVLAAYPAENATTAIDATGKTVLPGFVDPHTHALFAGDRSDEFAAKLRGKPYQEILAEGGGILRTVDAVRAASDAALVANLTAQLDVMLAHGTTTAEVKTGYGLDTETECRMLDAIAAAAAEHPVDVVTTFLGAHAVPDDTDADAYVDAVIDDQLPAAANGPARFCDVFCEADVFTVEQSRRILDAGREHGLAPKLHAEEFTRLGGAQLAADLGATSADHLLHATPEDAAALADAGVTPVLLPATAFVLDEAYADPQQFLAAADNRTGAPVALGTDLNPNCYTHSMGFVVSLACNGMRMAPADAVLAATAWAASALDRGRDGTGTLREGTDGDVLVVDAPSHVHLPYNPGVNNVEAVLTDGTVAVGGGGA</sequence>
<accession>Q9HQD6</accession>
<comment type="function">
    <text evidence="1">Catalyzes the hydrolytic cleavage of the carbon-nitrogen bond in imidazolone-5-propanoate to yield N-formimidoyl-L-glutamate. It is the third step in the universal histidine degradation pathway.</text>
</comment>
<comment type="catalytic activity">
    <reaction evidence="1">
        <text>4-imidazolone-5-propanoate + H2O = N-formimidoyl-L-glutamate</text>
        <dbReference type="Rhea" id="RHEA:23660"/>
        <dbReference type="ChEBI" id="CHEBI:15377"/>
        <dbReference type="ChEBI" id="CHEBI:58928"/>
        <dbReference type="ChEBI" id="CHEBI:77893"/>
        <dbReference type="EC" id="3.5.2.7"/>
    </reaction>
</comment>
<comment type="cofactor">
    <cofactor evidence="1">
        <name>Zn(2+)</name>
        <dbReference type="ChEBI" id="CHEBI:29105"/>
    </cofactor>
    <cofactor evidence="1">
        <name>Fe(3+)</name>
        <dbReference type="ChEBI" id="CHEBI:29034"/>
    </cofactor>
    <text evidence="1">Binds 1 zinc or iron ion per subunit.</text>
</comment>
<comment type="pathway">
    <text evidence="1">Amino-acid degradation; L-histidine degradation into L-glutamate; N-formimidoyl-L-glutamate from L-histidine: step 3/3.</text>
</comment>
<comment type="subcellular location">
    <subcellularLocation>
        <location evidence="1">Cytoplasm</location>
    </subcellularLocation>
</comment>
<comment type="similarity">
    <text evidence="1">Belongs to the metallo-dependent hydrolases superfamily. HutI family.</text>
</comment>
<gene>
    <name evidence="1" type="primary">hutI</name>
    <name type="ordered locus">VNG_1211G</name>
</gene>
<reference key="1">
    <citation type="journal article" date="2000" name="Proc. Natl. Acad. Sci. U.S.A.">
        <title>Genome sequence of Halobacterium species NRC-1.</title>
        <authorList>
            <person name="Ng W.V."/>
            <person name="Kennedy S.P."/>
            <person name="Mahairas G.G."/>
            <person name="Berquist B."/>
            <person name="Pan M."/>
            <person name="Shukla H.D."/>
            <person name="Lasky S.R."/>
            <person name="Baliga N.S."/>
            <person name="Thorsson V."/>
            <person name="Sbrogna J."/>
            <person name="Swartzell S."/>
            <person name="Weir D."/>
            <person name="Hall J."/>
            <person name="Dahl T.A."/>
            <person name="Welti R."/>
            <person name="Goo Y.A."/>
            <person name="Leithauser B."/>
            <person name="Keller K."/>
            <person name="Cruz R."/>
            <person name="Danson M.J."/>
            <person name="Hough D.W."/>
            <person name="Maddocks D.G."/>
            <person name="Jablonski P.E."/>
            <person name="Krebs M.P."/>
            <person name="Angevine C.M."/>
            <person name="Dale H."/>
            <person name="Isenbarger T.A."/>
            <person name="Peck R.F."/>
            <person name="Pohlschroder M."/>
            <person name="Spudich J.L."/>
            <person name="Jung K.-H."/>
            <person name="Alam M."/>
            <person name="Freitas T."/>
            <person name="Hou S."/>
            <person name="Daniels C.J."/>
            <person name="Dennis P.P."/>
            <person name="Omer A.D."/>
            <person name="Ebhardt H."/>
            <person name="Lowe T.M."/>
            <person name="Liang P."/>
            <person name="Riley M."/>
            <person name="Hood L."/>
            <person name="DasSarma S."/>
        </authorList>
    </citation>
    <scope>NUCLEOTIDE SEQUENCE [LARGE SCALE GENOMIC DNA]</scope>
    <source>
        <strain>ATCC 700922 / JCM 11081 / NRC-1</strain>
    </source>
</reference>
<protein>
    <recommendedName>
        <fullName evidence="1">Imidazolonepropionase</fullName>
        <ecNumber evidence="1">3.5.2.7</ecNumber>
    </recommendedName>
    <alternativeName>
        <fullName evidence="1">Imidazolone-5-propionate hydrolase</fullName>
    </alternativeName>
</protein>
<name>HUTI_HALSA</name>
<organism>
    <name type="scientific">Halobacterium salinarum (strain ATCC 700922 / JCM 11081 / NRC-1)</name>
    <name type="common">Halobacterium halobium</name>
    <dbReference type="NCBI Taxonomy" id="64091"/>
    <lineage>
        <taxon>Archaea</taxon>
        <taxon>Methanobacteriati</taxon>
        <taxon>Methanobacteriota</taxon>
        <taxon>Stenosarchaea group</taxon>
        <taxon>Halobacteria</taxon>
        <taxon>Halobacteriales</taxon>
        <taxon>Halobacteriaceae</taxon>
        <taxon>Halobacterium</taxon>
        <taxon>Halobacterium salinarum NRC-34001</taxon>
    </lineage>
</organism>
<evidence type="ECO:0000255" key="1">
    <source>
        <dbReference type="HAMAP-Rule" id="MF_00372"/>
    </source>
</evidence>